<evidence type="ECO:0000255" key="1">
    <source>
        <dbReference type="HAMAP-Rule" id="MF_00375"/>
    </source>
</evidence>
<gene>
    <name evidence="1" type="primary">hemL</name>
    <name type="ordered locus">Csal_3304</name>
</gene>
<reference key="1">
    <citation type="journal article" date="2011" name="Stand. Genomic Sci.">
        <title>Complete genome sequence of the halophilic and highly halotolerant Chromohalobacter salexigens type strain (1H11(T)).</title>
        <authorList>
            <person name="Copeland A."/>
            <person name="O'Connor K."/>
            <person name="Lucas S."/>
            <person name="Lapidus A."/>
            <person name="Berry K.W."/>
            <person name="Detter J.C."/>
            <person name="Del Rio T.G."/>
            <person name="Hammon N."/>
            <person name="Dalin E."/>
            <person name="Tice H."/>
            <person name="Pitluck S."/>
            <person name="Bruce D."/>
            <person name="Goodwin L."/>
            <person name="Han C."/>
            <person name="Tapia R."/>
            <person name="Saunders E."/>
            <person name="Schmutz J."/>
            <person name="Brettin T."/>
            <person name="Larimer F."/>
            <person name="Land M."/>
            <person name="Hauser L."/>
            <person name="Vargas C."/>
            <person name="Nieto J.J."/>
            <person name="Kyrpides N.C."/>
            <person name="Ivanova N."/>
            <person name="Goker M."/>
            <person name="Klenk H.P."/>
            <person name="Csonka L.N."/>
            <person name="Woyke T."/>
        </authorList>
    </citation>
    <scope>NUCLEOTIDE SEQUENCE [LARGE SCALE GENOMIC DNA]</scope>
    <source>
        <strain>ATCC BAA-138 / DSM 3043 / CIP 106854 / NCIMB 13768 / 1H11</strain>
    </source>
</reference>
<name>GSA_CHRSD</name>
<keyword id="KW-0963">Cytoplasm</keyword>
<keyword id="KW-0413">Isomerase</keyword>
<keyword id="KW-0627">Porphyrin biosynthesis</keyword>
<keyword id="KW-0663">Pyridoxal phosphate</keyword>
<keyword id="KW-1185">Reference proteome</keyword>
<accession>Q1QSB0</accession>
<sequence length="429" mass="45522">MTTSAQLFEQACRHIPGGVNSPVRAFKGMERAPVFVERAQGAYLYDVEGQRYIDYVGSWGPLITGHADPDVLGAVRSRLDDGLSFGTPTAIETRMAELICEIMPSIDMVRMVNSGTEATMSAIRLARGHTGRDKIVKFEGNYHGHSDSLLVKAGSGALTHGEPSSPGVPASLAEHTVTLPYNDLDAVRACFAELGDEIAGIIVEPVAGNMNCIPPQPDFLKGLREICDVHGSVLIFDEVMTGFRVALGGAQAHFGVTPDLTCLGKIVGGGMPVGAFGGTREIMEQLSPLGPIYQAGTLAGNPLAMAAGIALLEKIRQPGFHDALAERVATLCDGLEARAREAGVDLITQRAGGMFGVFFTAQQRVDNFAQATACNADTFRRFFLGMLEHGVYLAPSPFEAGFMSSAHTPDDIQATLDAAEQVLATLENA</sequence>
<feature type="chain" id="PRO_0000300902" description="Glutamate-1-semialdehyde 2,1-aminomutase">
    <location>
        <begin position="1"/>
        <end position="429"/>
    </location>
</feature>
<feature type="modified residue" description="N6-(pyridoxal phosphate)lysine" evidence="1">
    <location>
        <position position="265"/>
    </location>
</feature>
<dbReference type="EC" id="5.4.3.8" evidence="1"/>
<dbReference type="EMBL" id="CP000285">
    <property type="protein sequence ID" value="ABE60648.1"/>
    <property type="molecule type" value="Genomic_DNA"/>
</dbReference>
<dbReference type="RefSeq" id="WP_011508594.1">
    <property type="nucleotide sequence ID" value="NC_007963.1"/>
</dbReference>
<dbReference type="SMR" id="Q1QSB0"/>
<dbReference type="STRING" id="290398.Csal_3304"/>
<dbReference type="GeneID" id="95335995"/>
<dbReference type="KEGG" id="csa:Csal_3304"/>
<dbReference type="eggNOG" id="COG0001">
    <property type="taxonomic scope" value="Bacteria"/>
</dbReference>
<dbReference type="HOGENOM" id="CLU_016922_1_5_6"/>
<dbReference type="OrthoDB" id="9801052at2"/>
<dbReference type="UniPathway" id="UPA00251">
    <property type="reaction ID" value="UER00317"/>
</dbReference>
<dbReference type="Proteomes" id="UP000000239">
    <property type="component" value="Chromosome"/>
</dbReference>
<dbReference type="GO" id="GO:0005737">
    <property type="term" value="C:cytoplasm"/>
    <property type="evidence" value="ECO:0007669"/>
    <property type="project" value="UniProtKB-SubCell"/>
</dbReference>
<dbReference type="GO" id="GO:0042286">
    <property type="term" value="F:glutamate-1-semialdehyde 2,1-aminomutase activity"/>
    <property type="evidence" value="ECO:0007669"/>
    <property type="project" value="UniProtKB-UniRule"/>
</dbReference>
<dbReference type="GO" id="GO:0030170">
    <property type="term" value="F:pyridoxal phosphate binding"/>
    <property type="evidence" value="ECO:0007669"/>
    <property type="project" value="InterPro"/>
</dbReference>
<dbReference type="GO" id="GO:0008483">
    <property type="term" value="F:transaminase activity"/>
    <property type="evidence" value="ECO:0007669"/>
    <property type="project" value="InterPro"/>
</dbReference>
<dbReference type="GO" id="GO:0006782">
    <property type="term" value="P:protoporphyrinogen IX biosynthetic process"/>
    <property type="evidence" value="ECO:0007669"/>
    <property type="project" value="UniProtKB-UniRule"/>
</dbReference>
<dbReference type="CDD" id="cd00610">
    <property type="entry name" value="OAT_like"/>
    <property type="match status" value="1"/>
</dbReference>
<dbReference type="FunFam" id="3.40.640.10:FF:000021">
    <property type="entry name" value="Glutamate-1-semialdehyde 2,1-aminomutase"/>
    <property type="match status" value="1"/>
</dbReference>
<dbReference type="Gene3D" id="3.90.1150.10">
    <property type="entry name" value="Aspartate Aminotransferase, domain 1"/>
    <property type="match status" value="1"/>
</dbReference>
<dbReference type="Gene3D" id="3.40.640.10">
    <property type="entry name" value="Type I PLP-dependent aspartate aminotransferase-like (Major domain)"/>
    <property type="match status" value="1"/>
</dbReference>
<dbReference type="HAMAP" id="MF_00375">
    <property type="entry name" value="HemL_aminotrans_3"/>
    <property type="match status" value="1"/>
</dbReference>
<dbReference type="InterPro" id="IPR004639">
    <property type="entry name" value="4pyrrol_synth_GluAld_NH2Trfase"/>
</dbReference>
<dbReference type="InterPro" id="IPR005814">
    <property type="entry name" value="Aminotrans_3"/>
</dbReference>
<dbReference type="InterPro" id="IPR049704">
    <property type="entry name" value="Aminotrans_3_PPA_site"/>
</dbReference>
<dbReference type="InterPro" id="IPR015424">
    <property type="entry name" value="PyrdxlP-dep_Trfase"/>
</dbReference>
<dbReference type="InterPro" id="IPR015421">
    <property type="entry name" value="PyrdxlP-dep_Trfase_major"/>
</dbReference>
<dbReference type="InterPro" id="IPR015422">
    <property type="entry name" value="PyrdxlP-dep_Trfase_small"/>
</dbReference>
<dbReference type="NCBIfam" id="TIGR00713">
    <property type="entry name" value="hemL"/>
    <property type="match status" value="1"/>
</dbReference>
<dbReference type="NCBIfam" id="NF000818">
    <property type="entry name" value="PRK00062.1"/>
    <property type="match status" value="1"/>
</dbReference>
<dbReference type="PANTHER" id="PTHR43713">
    <property type="entry name" value="GLUTAMATE-1-SEMIALDEHYDE 2,1-AMINOMUTASE"/>
    <property type="match status" value="1"/>
</dbReference>
<dbReference type="PANTHER" id="PTHR43713:SF3">
    <property type="entry name" value="GLUTAMATE-1-SEMIALDEHYDE 2,1-AMINOMUTASE 1, CHLOROPLASTIC-RELATED"/>
    <property type="match status" value="1"/>
</dbReference>
<dbReference type="Pfam" id="PF00202">
    <property type="entry name" value="Aminotran_3"/>
    <property type="match status" value="1"/>
</dbReference>
<dbReference type="SUPFAM" id="SSF53383">
    <property type="entry name" value="PLP-dependent transferases"/>
    <property type="match status" value="1"/>
</dbReference>
<dbReference type="PROSITE" id="PS00600">
    <property type="entry name" value="AA_TRANSFER_CLASS_3"/>
    <property type="match status" value="1"/>
</dbReference>
<comment type="catalytic activity">
    <reaction evidence="1">
        <text>(S)-4-amino-5-oxopentanoate = 5-aminolevulinate</text>
        <dbReference type="Rhea" id="RHEA:14265"/>
        <dbReference type="ChEBI" id="CHEBI:57501"/>
        <dbReference type="ChEBI" id="CHEBI:356416"/>
        <dbReference type="EC" id="5.4.3.8"/>
    </reaction>
</comment>
<comment type="cofactor">
    <cofactor evidence="1">
        <name>pyridoxal 5'-phosphate</name>
        <dbReference type="ChEBI" id="CHEBI:597326"/>
    </cofactor>
</comment>
<comment type="pathway">
    <text evidence="1">Porphyrin-containing compound metabolism; protoporphyrin-IX biosynthesis; 5-aminolevulinate from L-glutamyl-tRNA(Glu): step 2/2.</text>
</comment>
<comment type="subunit">
    <text evidence="1">Homodimer.</text>
</comment>
<comment type="subcellular location">
    <subcellularLocation>
        <location evidence="1">Cytoplasm</location>
    </subcellularLocation>
</comment>
<comment type="similarity">
    <text evidence="1">Belongs to the class-III pyridoxal-phosphate-dependent aminotransferase family. HemL subfamily.</text>
</comment>
<proteinExistence type="inferred from homology"/>
<protein>
    <recommendedName>
        <fullName evidence="1">Glutamate-1-semialdehyde 2,1-aminomutase</fullName>
        <shortName evidence="1">GSA</shortName>
        <ecNumber evidence="1">5.4.3.8</ecNumber>
    </recommendedName>
    <alternativeName>
        <fullName evidence="1">Glutamate-1-semialdehyde aminotransferase</fullName>
        <shortName evidence="1">GSA-AT</shortName>
    </alternativeName>
</protein>
<organism>
    <name type="scientific">Chromohalobacter salexigens (strain ATCC BAA-138 / DSM 3043 / CIP 106854 / NCIMB 13768 / 1H11)</name>
    <dbReference type="NCBI Taxonomy" id="290398"/>
    <lineage>
        <taxon>Bacteria</taxon>
        <taxon>Pseudomonadati</taxon>
        <taxon>Pseudomonadota</taxon>
        <taxon>Gammaproteobacteria</taxon>
        <taxon>Oceanospirillales</taxon>
        <taxon>Halomonadaceae</taxon>
        <taxon>Chromohalobacter</taxon>
    </lineage>
</organism>